<protein>
    <recommendedName>
        <fullName evidence="1">Glutamate--cysteine ligase</fullName>
        <ecNumber evidence="1">6.3.2.2</ecNumber>
    </recommendedName>
    <alternativeName>
        <fullName evidence="1">Gamma-ECS</fullName>
        <shortName evidence="1">GCS</shortName>
    </alternativeName>
    <alternativeName>
        <fullName evidence="1">Gamma-glutamylcysteine synthetase</fullName>
    </alternativeName>
</protein>
<reference key="1">
    <citation type="submission" date="2002-12" db="EMBL/GenBank/DDBJ databases">
        <title>Complete genome sequence of Vibrio vulnificus CMCP6.</title>
        <authorList>
            <person name="Rhee J.H."/>
            <person name="Kim S.Y."/>
            <person name="Chung S.S."/>
            <person name="Kim J.J."/>
            <person name="Moon Y.H."/>
            <person name="Jeong H."/>
            <person name="Choy H.E."/>
        </authorList>
    </citation>
    <scope>NUCLEOTIDE SEQUENCE [LARGE SCALE GENOMIC DNA]</scope>
    <source>
        <strain>CMCP6</strain>
    </source>
</reference>
<name>GSH1_VIBVU</name>
<dbReference type="EC" id="6.3.2.2" evidence="1"/>
<dbReference type="EMBL" id="AE016795">
    <property type="protein sequence ID" value="AAO10027.1"/>
    <property type="molecule type" value="Genomic_DNA"/>
</dbReference>
<dbReference type="SMR" id="Q8DC38"/>
<dbReference type="KEGG" id="vvu:VV1_1606"/>
<dbReference type="HOGENOM" id="CLU_020728_3_0_6"/>
<dbReference type="UniPathway" id="UPA00142">
    <property type="reaction ID" value="UER00209"/>
</dbReference>
<dbReference type="Proteomes" id="UP000002275">
    <property type="component" value="Chromosome 1"/>
</dbReference>
<dbReference type="GO" id="GO:0005829">
    <property type="term" value="C:cytosol"/>
    <property type="evidence" value="ECO:0007669"/>
    <property type="project" value="TreeGrafter"/>
</dbReference>
<dbReference type="GO" id="GO:0005524">
    <property type="term" value="F:ATP binding"/>
    <property type="evidence" value="ECO:0007669"/>
    <property type="project" value="UniProtKB-KW"/>
</dbReference>
<dbReference type="GO" id="GO:0004357">
    <property type="term" value="F:glutamate-cysteine ligase activity"/>
    <property type="evidence" value="ECO:0007669"/>
    <property type="project" value="UniProtKB-UniRule"/>
</dbReference>
<dbReference type="GO" id="GO:0046872">
    <property type="term" value="F:metal ion binding"/>
    <property type="evidence" value="ECO:0007669"/>
    <property type="project" value="TreeGrafter"/>
</dbReference>
<dbReference type="GO" id="GO:0006750">
    <property type="term" value="P:glutathione biosynthetic process"/>
    <property type="evidence" value="ECO:0007669"/>
    <property type="project" value="UniProtKB-UniRule"/>
</dbReference>
<dbReference type="Gene3D" id="3.30.590.20">
    <property type="match status" value="1"/>
</dbReference>
<dbReference type="HAMAP" id="MF_00578">
    <property type="entry name" value="Glu_cys_ligase"/>
    <property type="match status" value="1"/>
</dbReference>
<dbReference type="InterPro" id="IPR014746">
    <property type="entry name" value="Gln_synth/guanido_kin_cat_dom"/>
</dbReference>
<dbReference type="InterPro" id="IPR007370">
    <property type="entry name" value="Glu_cys_ligase"/>
</dbReference>
<dbReference type="InterPro" id="IPR006334">
    <property type="entry name" value="Glut_cys_ligase"/>
</dbReference>
<dbReference type="NCBIfam" id="TIGR01434">
    <property type="entry name" value="glu_cys_ligase"/>
    <property type="match status" value="1"/>
</dbReference>
<dbReference type="PANTHER" id="PTHR38761">
    <property type="entry name" value="GLUTAMATE--CYSTEINE LIGASE"/>
    <property type="match status" value="1"/>
</dbReference>
<dbReference type="PANTHER" id="PTHR38761:SF1">
    <property type="entry name" value="GLUTAMATE--CYSTEINE LIGASE"/>
    <property type="match status" value="1"/>
</dbReference>
<dbReference type="Pfam" id="PF04262">
    <property type="entry name" value="Glu_cys_ligase"/>
    <property type="match status" value="1"/>
</dbReference>
<dbReference type="SUPFAM" id="SSF55931">
    <property type="entry name" value="Glutamine synthetase/guanido kinase"/>
    <property type="match status" value="1"/>
</dbReference>
<proteinExistence type="inferred from homology"/>
<evidence type="ECO:0000255" key="1">
    <source>
        <dbReference type="HAMAP-Rule" id="MF_00578"/>
    </source>
</evidence>
<comment type="catalytic activity">
    <reaction evidence="1">
        <text>L-cysteine + L-glutamate + ATP = gamma-L-glutamyl-L-cysteine + ADP + phosphate + H(+)</text>
        <dbReference type="Rhea" id="RHEA:13285"/>
        <dbReference type="ChEBI" id="CHEBI:15378"/>
        <dbReference type="ChEBI" id="CHEBI:29985"/>
        <dbReference type="ChEBI" id="CHEBI:30616"/>
        <dbReference type="ChEBI" id="CHEBI:35235"/>
        <dbReference type="ChEBI" id="CHEBI:43474"/>
        <dbReference type="ChEBI" id="CHEBI:58173"/>
        <dbReference type="ChEBI" id="CHEBI:456216"/>
        <dbReference type="EC" id="6.3.2.2"/>
    </reaction>
</comment>
<comment type="pathway">
    <text evidence="1">Sulfur metabolism; glutathione biosynthesis; glutathione from L-cysteine and L-glutamate: step 1/2.</text>
</comment>
<comment type="similarity">
    <text evidence="1">Belongs to the glutamate--cysteine ligase type 1 family. Type 1 subfamily.</text>
</comment>
<sequence>MNFILTDFAARLELVARNPEVFKQFGRGVERETLRYSQNGRIATTMHPQGLGSAFTNQWITTDFAESLLEFITPVSHDIDVLLGQLDDIHHFTQTQLGEEKMWPMSMPCYVETEDQITLAQYGSSNSAKMKTLYREGLKRRYGSLMQIISGVHFNFSFPESFWDALHGEQTEDERQATKSEAYFGLIRNYYRFGWLIPYFFGASPAMCSSFLQGRETSLPFEALGKTLYLPKATSLRLSDLGYTNSAQSVLTIGFNSIDEYLEGLTKAIRTPSAEFAKLGVKENGEYRQLNSNVLQIENELYAPIRPKRVAKNGEKPSEALARGGVEYIEVRSLDVNPFTPVGITETQVRFLDLFLTWAALSESQPMDQCELACWRENWNKVVVSGREYGLELQIGCKGEKLSLQAWAHRVFAELRQLAEVMDSAHGDNQYSLACSELEQWIDHPEKTLSAQLLTLIQQNGSLGATGCELGGAYREQNLAHHYRHFSLQQMEQEVALSLIKQSQIEQADEVDFDTYLADYFAYLK</sequence>
<feature type="chain" id="PRO_0000192544" description="Glutamate--cysteine ligase">
    <location>
        <begin position="1"/>
        <end position="525"/>
    </location>
</feature>
<organism>
    <name type="scientific">Vibrio vulnificus (strain CMCP6)</name>
    <dbReference type="NCBI Taxonomy" id="216895"/>
    <lineage>
        <taxon>Bacteria</taxon>
        <taxon>Pseudomonadati</taxon>
        <taxon>Pseudomonadota</taxon>
        <taxon>Gammaproteobacteria</taxon>
        <taxon>Vibrionales</taxon>
        <taxon>Vibrionaceae</taxon>
        <taxon>Vibrio</taxon>
    </lineage>
</organism>
<accession>Q8DC38</accession>
<keyword id="KW-0067">ATP-binding</keyword>
<keyword id="KW-0317">Glutathione biosynthesis</keyword>
<keyword id="KW-0436">Ligase</keyword>
<keyword id="KW-0547">Nucleotide-binding</keyword>
<gene>
    <name evidence="1" type="primary">gshA</name>
    <name type="ordered locus">VV1_1606</name>
</gene>